<name>RS7_XYLF2</name>
<organism>
    <name type="scientific">Xylella fastidiosa (strain M23)</name>
    <dbReference type="NCBI Taxonomy" id="405441"/>
    <lineage>
        <taxon>Bacteria</taxon>
        <taxon>Pseudomonadati</taxon>
        <taxon>Pseudomonadota</taxon>
        <taxon>Gammaproteobacteria</taxon>
        <taxon>Lysobacterales</taxon>
        <taxon>Lysobacteraceae</taxon>
        <taxon>Xylella</taxon>
    </lineage>
</organism>
<dbReference type="EMBL" id="CP001011">
    <property type="protein sequence ID" value="ACB93501.1"/>
    <property type="molecule type" value="Genomic_DNA"/>
</dbReference>
<dbReference type="RefSeq" id="WP_004090723.1">
    <property type="nucleotide sequence ID" value="NC_010577.1"/>
</dbReference>
<dbReference type="SMR" id="B2IA65"/>
<dbReference type="GeneID" id="93905859"/>
<dbReference type="KEGG" id="xfn:XfasM23_2103"/>
<dbReference type="HOGENOM" id="CLU_072226_1_1_6"/>
<dbReference type="Proteomes" id="UP000001698">
    <property type="component" value="Chromosome"/>
</dbReference>
<dbReference type="GO" id="GO:0015935">
    <property type="term" value="C:small ribosomal subunit"/>
    <property type="evidence" value="ECO:0007669"/>
    <property type="project" value="InterPro"/>
</dbReference>
<dbReference type="GO" id="GO:0019843">
    <property type="term" value="F:rRNA binding"/>
    <property type="evidence" value="ECO:0007669"/>
    <property type="project" value="UniProtKB-UniRule"/>
</dbReference>
<dbReference type="GO" id="GO:0003735">
    <property type="term" value="F:structural constituent of ribosome"/>
    <property type="evidence" value="ECO:0007669"/>
    <property type="project" value="InterPro"/>
</dbReference>
<dbReference type="GO" id="GO:0000049">
    <property type="term" value="F:tRNA binding"/>
    <property type="evidence" value="ECO:0007669"/>
    <property type="project" value="UniProtKB-UniRule"/>
</dbReference>
<dbReference type="GO" id="GO:0006412">
    <property type="term" value="P:translation"/>
    <property type="evidence" value="ECO:0007669"/>
    <property type="project" value="UniProtKB-UniRule"/>
</dbReference>
<dbReference type="CDD" id="cd14869">
    <property type="entry name" value="uS7_Bacteria"/>
    <property type="match status" value="1"/>
</dbReference>
<dbReference type="FunFam" id="1.10.455.10:FF:000001">
    <property type="entry name" value="30S ribosomal protein S7"/>
    <property type="match status" value="1"/>
</dbReference>
<dbReference type="Gene3D" id="1.10.455.10">
    <property type="entry name" value="Ribosomal protein S7 domain"/>
    <property type="match status" value="1"/>
</dbReference>
<dbReference type="HAMAP" id="MF_00480_B">
    <property type="entry name" value="Ribosomal_uS7_B"/>
    <property type="match status" value="1"/>
</dbReference>
<dbReference type="InterPro" id="IPR000235">
    <property type="entry name" value="Ribosomal_uS7"/>
</dbReference>
<dbReference type="InterPro" id="IPR005717">
    <property type="entry name" value="Ribosomal_uS7_bac/org-type"/>
</dbReference>
<dbReference type="InterPro" id="IPR020606">
    <property type="entry name" value="Ribosomal_uS7_CS"/>
</dbReference>
<dbReference type="InterPro" id="IPR023798">
    <property type="entry name" value="Ribosomal_uS7_dom"/>
</dbReference>
<dbReference type="InterPro" id="IPR036823">
    <property type="entry name" value="Ribosomal_uS7_dom_sf"/>
</dbReference>
<dbReference type="NCBIfam" id="TIGR01029">
    <property type="entry name" value="rpsG_bact"/>
    <property type="match status" value="1"/>
</dbReference>
<dbReference type="PANTHER" id="PTHR11205">
    <property type="entry name" value="RIBOSOMAL PROTEIN S7"/>
    <property type="match status" value="1"/>
</dbReference>
<dbReference type="Pfam" id="PF00177">
    <property type="entry name" value="Ribosomal_S7"/>
    <property type="match status" value="1"/>
</dbReference>
<dbReference type="PIRSF" id="PIRSF002122">
    <property type="entry name" value="RPS7p_RPS7a_RPS5e_RPS7o"/>
    <property type="match status" value="1"/>
</dbReference>
<dbReference type="SUPFAM" id="SSF47973">
    <property type="entry name" value="Ribosomal protein S7"/>
    <property type="match status" value="1"/>
</dbReference>
<dbReference type="PROSITE" id="PS00052">
    <property type="entry name" value="RIBOSOMAL_S7"/>
    <property type="match status" value="1"/>
</dbReference>
<comment type="function">
    <text evidence="1">One of the primary rRNA binding proteins, it binds directly to 16S rRNA where it nucleates assembly of the head domain of the 30S subunit. Is located at the subunit interface close to the decoding center, probably blocks exit of the E-site tRNA.</text>
</comment>
<comment type="subunit">
    <text evidence="1">Part of the 30S ribosomal subunit. Contacts proteins S9 and S11.</text>
</comment>
<comment type="similarity">
    <text evidence="1">Belongs to the universal ribosomal protein uS7 family.</text>
</comment>
<reference key="1">
    <citation type="journal article" date="2010" name="J. Bacteriol.">
        <title>Whole genome sequences of two Xylella fastidiosa strains (M12 and M23) causing almond leaf scorch disease in California.</title>
        <authorList>
            <person name="Chen J."/>
            <person name="Xie G."/>
            <person name="Han S."/>
            <person name="Chertkov O."/>
            <person name="Sims D."/>
            <person name="Civerolo E.L."/>
        </authorList>
    </citation>
    <scope>NUCLEOTIDE SEQUENCE [LARGE SCALE GENOMIC DNA]</scope>
    <source>
        <strain>M23</strain>
    </source>
</reference>
<proteinExistence type="inferred from homology"/>
<accession>B2IA65</accession>
<sequence length="155" mass="17304">MSRKGSTPQRNVLPDPKYGSETIARFINMVMKSGKKSVAEKIVYGAMNVIGEKNSNAIELLQKALDNVSPAVEVKSRRVGGATYQVPVEVRASRRMALAMRWLIDSSRKRGENSMPRKLAAELLDASESRGGAIKKRDETHRMAEANKAFAHYRW</sequence>
<keyword id="KW-0687">Ribonucleoprotein</keyword>
<keyword id="KW-0689">Ribosomal protein</keyword>
<keyword id="KW-0694">RNA-binding</keyword>
<keyword id="KW-0699">rRNA-binding</keyword>
<keyword id="KW-0820">tRNA-binding</keyword>
<gene>
    <name evidence="1" type="primary">rpsG</name>
    <name type="ordered locus">XfasM23_2103</name>
</gene>
<evidence type="ECO:0000255" key="1">
    <source>
        <dbReference type="HAMAP-Rule" id="MF_00480"/>
    </source>
</evidence>
<evidence type="ECO:0000305" key="2"/>
<feature type="chain" id="PRO_1000126028" description="Small ribosomal subunit protein uS7">
    <location>
        <begin position="1"/>
        <end position="155"/>
    </location>
</feature>
<protein>
    <recommendedName>
        <fullName evidence="1">Small ribosomal subunit protein uS7</fullName>
    </recommendedName>
    <alternativeName>
        <fullName evidence="2">30S ribosomal protein S7</fullName>
    </alternativeName>
</protein>